<accession>B3E8F9</accession>
<comment type="function">
    <text evidence="1">Together with the chaperonin GroEL, plays an essential role in assisting protein folding. The GroEL-GroES system forms a nano-cage that allows encapsulation of the non-native substrate proteins and provides a physical environment optimized to promote and accelerate protein folding. GroES binds to the apical surface of the GroEL ring, thereby capping the opening of the GroEL channel.</text>
</comment>
<comment type="subunit">
    <text evidence="1">Heptamer of 7 subunits arranged in a ring. Interacts with the chaperonin GroEL.</text>
</comment>
<comment type="subcellular location">
    <subcellularLocation>
        <location evidence="1">Cytoplasm</location>
    </subcellularLocation>
</comment>
<comment type="similarity">
    <text evidence="1">Belongs to the GroES chaperonin family.</text>
</comment>
<name>CH10_TRIL1</name>
<proteinExistence type="inferred from homology"/>
<protein>
    <recommendedName>
        <fullName evidence="1">Co-chaperonin GroES</fullName>
    </recommendedName>
    <alternativeName>
        <fullName evidence="1">10 kDa chaperonin</fullName>
    </alternativeName>
    <alternativeName>
        <fullName evidence="1">Chaperonin-10</fullName>
        <shortName evidence="1">Cpn10</shortName>
    </alternativeName>
</protein>
<organism>
    <name type="scientific">Trichlorobacter lovleyi (strain ATCC BAA-1151 / DSM 17278 / SZ)</name>
    <name type="common">Geobacter lovleyi</name>
    <dbReference type="NCBI Taxonomy" id="398767"/>
    <lineage>
        <taxon>Bacteria</taxon>
        <taxon>Pseudomonadati</taxon>
        <taxon>Thermodesulfobacteriota</taxon>
        <taxon>Desulfuromonadia</taxon>
        <taxon>Geobacterales</taxon>
        <taxon>Geobacteraceae</taxon>
        <taxon>Trichlorobacter</taxon>
    </lineage>
</organism>
<dbReference type="EMBL" id="CP001089">
    <property type="protein sequence ID" value="ACD96635.1"/>
    <property type="molecule type" value="Genomic_DNA"/>
</dbReference>
<dbReference type="RefSeq" id="WP_012470960.1">
    <property type="nucleotide sequence ID" value="NC_010814.1"/>
</dbReference>
<dbReference type="SMR" id="B3E8F9"/>
<dbReference type="STRING" id="398767.Glov_2928"/>
<dbReference type="KEGG" id="glo:Glov_2928"/>
<dbReference type="eggNOG" id="COG0234">
    <property type="taxonomic scope" value="Bacteria"/>
</dbReference>
<dbReference type="HOGENOM" id="CLU_132825_1_0_7"/>
<dbReference type="OrthoDB" id="9806791at2"/>
<dbReference type="Proteomes" id="UP000002420">
    <property type="component" value="Chromosome"/>
</dbReference>
<dbReference type="GO" id="GO:0005737">
    <property type="term" value="C:cytoplasm"/>
    <property type="evidence" value="ECO:0007669"/>
    <property type="project" value="UniProtKB-SubCell"/>
</dbReference>
<dbReference type="GO" id="GO:0005524">
    <property type="term" value="F:ATP binding"/>
    <property type="evidence" value="ECO:0007669"/>
    <property type="project" value="InterPro"/>
</dbReference>
<dbReference type="GO" id="GO:0046872">
    <property type="term" value="F:metal ion binding"/>
    <property type="evidence" value="ECO:0007669"/>
    <property type="project" value="TreeGrafter"/>
</dbReference>
<dbReference type="GO" id="GO:0044183">
    <property type="term" value="F:protein folding chaperone"/>
    <property type="evidence" value="ECO:0007669"/>
    <property type="project" value="InterPro"/>
</dbReference>
<dbReference type="GO" id="GO:0051087">
    <property type="term" value="F:protein-folding chaperone binding"/>
    <property type="evidence" value="ECO:0007669"/>
    <property type="project" value="TreeGrafter"/>
</dbReference>
<dbReference type="GO" id="GO:0051082">
    <property type="term" value="F:unfolded protein binding"/>
    <property type="evidence" value="ECO:0007669"/>
    <property type="project" value="TreeGrafter"/>
</dbReference>
<dbReference type="GO" id="GO:0051085">
    <property type="term" value="P:chaperone cofactor-dependent protein refolding"/>
    <property type="evidence" value="ECO:0007669"/>
    <property type="project" value="TreeGrafter"/>
</dbReference>
<dbReference type="CDD" id="cd00320">
    <property type="entry name" value="cpn10"/>
    <property type="match status" value="1"/>
</dbReference>
<dbReference type="FunFam" id="2.30.33.40:FF:000001">
    <property type="entry name" value="10 kDa chaperonin"/>
    <property type="match status" value="1"/>
</dbReference>
<dbReference type="Gene3D" id="2.30.33.40">
    <property type="entry name" value="GroES chaperonin"/>
    <property type="match status" value="1"/>
</dbReference>
<dbReference type="HAMAP" id="MF_00580">
    <property type="entry name" value="CH10"/>
    <property type="match status" value="1"/>
</dbReference>
<dbReference type="InterPro" id="IPR020818">
    <property type="entry name" value="Chaperonin_GroES"/>
</dbReference>
<dbReference type="InterPro" id="IPR037124">
    <property type="entry name" value="Chaperonin_GroES_sf"/>
</dbReference>
<dbReference type="InterPro" id="IPR018369">
    <property type="entry name" value="Chaprnonin_Cpn10_CS"/>
</dbReference>
<dbReference type="InterPro" id="IPR011032">
    <property type="entry name" value="GroES-like_sf"/>
</dbReference>
<dbReference type="NCBIfam" id="NF001527">
    <property type="entry name" value="PRK00364.1-2"/>
    <property type="match status" value="1"/>
</dbReference>
<dbReference type="NCBIfam" id="NF001529">
    <property type="entry name" value="PRK00364.1-5"/>
    <property type="match status" value="1"/>
</dbReference>
<dbReference type="NCBIfam" id="NF001530">
    <property type="entry name" value="PRK00364.1-6"/>
    <property type="match status" value="1"/>
</dbReference>
<dbReference type="NCBIfam" id="NF001531">
    <property type="entry name" value="PRK00364.2-2"/>
    <property type="match status" value="1"/>
</dbReference>
<dbReference type="NCBIfam" id="NF001533">
    <property type="entry name" value="PRK00364.2-4"/>
    <property type="match status" value="1"/>
</dbReference>
<dbReference type="NCBIfam" id="NF001534">
    <property type="entry name" value="PRK00364.2-5"/>
    <property type="match status" value="1"/>
</dbReference>
<dbReference type="PANTHER" id="PTHR10772">
    <property type="entry name" value="10 KDA HEAT SHOCK PROTEIN"/>
    <property type="match status" value="1"/>
</dbReference>
<dbReference type="PANTHER" id="PTHR10772:SF58">
    <property type="entry name" value="CO-CHAPERONIN GROES"/>
    <property type="match status" value="1"/>
</dbReference>
<dbReference type="Pfam" id="PF00166">
    <property type="entry name" value="Cpn10"/>
    <property type="match status" value="1"/>
</dbReference>
<dbReference type="PRINTS" id="PR00297">
    <property type="entry name" value="CHAPERONIN10"/>
</dbReference>
<dbReference type="SMART" id="SM00883">
    <property type="entry name" value="Cpn10"/>
    <property type="match status" value="1"/>
</dbReference>
<dbReference type="SUPFAM" id="SSF50129">
    <property type="entry name" value="GroES-like"/>
    <property type="match status" value="1"/>
</dbReference>
<dbReference type="PROSITE" id="PS00681">
    <property type="entry name" value="CHAPERONINS_CPN10"/>
    <property type="match status" value="1"/>
</dbReference>
<gene>
    <name evidence="1" type="primary">groES</name>
    <name evidence="1" type="synonym">groS</name>
    <name type="ordered locus">Glov_2928</name>
</gene>
<reference key="1">
    <citation type="submission" date="2008-05" db="EMBL/GenBank/DDBJ databases">
        <title>Complete sequence of chromosome of Geobacter lovleyi SZ.</title>
        <authorList>
            <consortium name="US DOE Joint Genome Institute"/>
            <person name="Lucas S."/>
            <person name="Copeland A."/>
            <person name="Lapidus A."/>
            <person name="Glavina del Rio T."/>
            <person name="Dalin E."/>
            <person name="Tice H."/>
            <person name="Bruce D."/>
            <person name="Goodwin L."/>
            <person name="Pitluck S."/>
            <person name="Chertkov O."/>
            <person name="Meincke L."/>
            <person name="Brettin T."/>
            <person name="Detter J.C."/>
            <person name="Han C."/>
            <person name="Tapia R."/>
            <person name="Kuske C.R."/>
            <person name="Schmutz J."/>
            <person name="Larimer F."/>
            <person name="Land M."/>
            <person name="Hauser L."/>
            <person name="Kyrpides N."/>
            <person name="Mikhailova N."/>
            <person name="Sung Y."/>
            <person name="Fletcher K.E."/>
            <person name="Ritalahti K.M."/>
            <person name="Loeffler F.E."/>
            <person name="Richardson P."/>
        </authorList>
    </citation>
    <scope>NUCLEOTIDE SEQUENCE [LARGE SCALE GENOMIC DNA]</scope>
    <source>
        <strain>ATCC BAA-1151 / DSM 17278 / SZ</strain>
    </source>
</reference>
<keyword id="KW-0143">Chaperone</keyword>
<keyword id="KW-0963">Cytoplasm</keyword>
<keyword id="KW-1185">Reference proteome</keyword>
<sequence>MKLRPLHDRIIVKRLEGEEKTAGGLFIPDTAKEKPQKGEVIAVGNGKKNDEGKCAPLDVKVGDSILFGKYAGTEVKVDGDEFLMMREDDVLAVIEK</sequence>
<feature type="chain" id="PRO_1000129666" description="Co-chaperonin GroES">
    <location>
        <begin position="1"/>
        <end position="96"/>
    </location>
</feature>
<evidence type="ECO:0000255" key="1">
    <source>
        <dbReference type="HAMAP-Rule" id="MF_00580"/>
    </source>
</evidence>